<comment type="function">
    <text evidence="1">Specifically methylates position 2 of adenine 2503 in 23S rRNA and position 2 of adenine 37 in tRNAs. m2A2503 modification seems to play a crucial role in the proofreading step occurring at the peptidyl transferase center and thus would serve to optimize ribosomal fidelity.</text>
</comment>
<comment type="catalytic activity">
    <reaction evidence="1">
        <text>adenosine(2503) in 23S rRNA + 2 reduced [2Fe-2S]-[ferredoxin] + 2 S-adenosyl-L-methionine = 2-methyladenosine(2503) in 23S rRNA + 5'-deoxyadenosine + L-methionine + 2 oxidized [2Fe-2S]-[ferredoxin] + S-adenosyl-L-homocysteine</text>
        <dbReference type="Rhea" id="RHEA:42916"/>
        <dbReference type="Rhea" id="RHEA-COMP:10000"/>
        <dbReference type="Rhea" id="RHEA-COMP:10001"/>
        <dbReference type="Rhea" id="RHEA-COMP:10152"/>
        <dbReference type="Rhea" id="RHEA-COMP:10282"/>
        <dbReference type="ChEBI" id="CHEBI:17319"/>
        <dbReference type="ChEBI" id="CHEBI:33737"/>
        <dbReference type="ChEBI" id="CHEBI:33738"/>
        <dbReference type="ChEBI" id="CHEBI:57844"/>
        <dbReference type="ChEBI" id="CHEBI:57856"/>
        <dbReference type="ChEBI" id="CHEBI:59789"/>
        <dbReference type="ChEBI" id="CHEBI:74411"/>
        <dbReference type="ChEBI" id="CHEBI:74497"/>
        <dbReference type="EC" id="2.1.1.192"/>
    </reaction>
</comment>
<comment type="catalytic activity">
    <reaction evidence="1">
        <text>adenosine(37) in tRNA + 2 reduced [2Fe-2S]-[ferredoxin] + 2 S-adenosyl-L-methionine = 2-methyladenosine(37) in tRNA + 5'-deoxyadenosine + L-methionine + 2 oxidized [2Fe-2S]-[ferredoxin] + S-adenosyl-L-homocysteine</text>
        <dbReference type="Rhea" id="RHEA:43332"/>
        <dbReference type="Rhea" id="RHEA-COMP:10000"/>
        <dbReference type="Rhea" id="RHEA-COMP:10001"/>
        <dbReference type="Rhea" id="RHEA-COMP:10162"/>
        <dbReference type="Rhea" id="RHEA-COMP:10485"/>
        <dbReference type="ChEBI" id="CHEBI:17319"/>
        <dbReference type="ChEBI" id="CHEBI:33737"/>
        <dbReference type="ChEBI" id="CHEBI:33738"/>
        <dbReference type="ChEBI" id="CHEBI:57844"/>
        <dbReference type="ChEBI" id="CHEBI:57856"/>
        <dbReference type="ChEBI" id="CHEBI:59789"/>
        <dbReference type="ChEBI" id="CHEBI:74411"/>
        <dbReference type="ChEBI" id="CHEBI:74497"/>
        <dbReference type="EC" id="2.1.1.192"/>
    </reaction>
</comment>
<comment type="cofactor">
    <cofactor evidence="1">
        <name>[4Fe-4S] cluster</name>
        <dbReference type="ChEBI" id="CHEBI:49883"/>
    </cofactor>
    <text evidence="1">Binds 1 [4Fe-4S] cluster. The cluster is coordinated with 3 cysteines and an exchangeable S-adenosyl-L-methionine.</text>
</comment>
<comment type="subcellular location">
    <subcellularLocation>
        <location evidence="1">Cytoplasm</location>
    </subcellularLocation>
</comment>
<comment type="miscellaneous">
    <text evidence="1">Reaction proceeds by a ping-pong mechanism involving intermediate methylation of a conserved cysteine residue.</text>
</comment>
<comment type="similarity">
    <text evidence="1">Belongs to the radical SAM superfamily. RlmN family.</text>
</comment>
<accession>Q603C0</accession>
<evidence type="ECO:0000255" key="1">
    <source>
        <dbReference type="HAMAP-Rule" id="MF_01849"/>
    </source>
</evidence>
<evidence type="ECO:0000255" key="2">
    <source>
        <dbReference type="PROSITE-ProRule" id="PRU01266"/>
    </source>
</evidence>
<reference key="1">
    <citation type="journal article" date="2004" name="PLoS Biol.">
        <title>Genomic insights into methanotrophy: the complete genome sequence of Methylococcus capsulatus (Bath).</title>
        <authorList>
            <person name="Ward N.L."/>
            <person name="Larsen O."/>
            <person name="Sakwa J."/>
            <person name="Bruseth L."/>
            <person name="Khouri H.M."/>
            <person name="Durkin A.S."/>
            <person name="Dimitrov G."/>
            <person name="Jiang L."/>
            <person name="Scanlan D."/>
            <person name="Kang K.H."/>
            <person name="Lewis M.R."/>
            <person name="Nelson K.E."/>
            <person name="Methe B.A."/>
            <person name="Wu M."/>
            <person name="Heidelberg J.F."/>
            <person name="Paulsen I.T."/>
            <person name="Fouts D.E."/>
            <person name="Ravel J."/>
            <person name="Tettelin H."/>
            <person name="Ren Q."/>
            <person name="Read T.D."/>
            <person name="DeBoy R.T."/>
            <person name="Seshadri R."/>
            <person name="Salzberg S.L."/>
            <person name="Jensen H.B."/>
            <person name="Birkeland N.K."/>
            <person name="Nelson W.C."/>
            <person name="Dodson R.J."/>
            <person name="Grindhaug S.H."/>
            <person name="Holt I.E."/>
            <person name="Eidhammer I."/>
            <person name="Jonasen I."/>
            <person name="Vanaken S."/>
            <person name="Utterback T.R."/>
            <person name="Feldblyum T.V."/>
            <person name="Fraser C.M."/>
            <person name="Lillehaug J.R."/>
            <person name="Eisen J.A."/>
        </authorList>
    </citation>
    <scope>NUCLEOTIDE SEQUENCE [LARGE SCALE GENOMIC DNA]</scope>
    <source>
        <strain>ATCC 33009 / NCIMB 11132 / Bath</strain>
    </source>
</reference>
<protein>
    <recommendedName>
        <fullName evidence="1">Dual-specificity RNA methyltransferase RlmN</fullName>
        <ecNumber evidence="1">2.1.1.192</ecNumber>
    </recommendedName>
    <alternativeName>
        <fullName evidence="1">23S rRNA (adenine(2503)-C(2))-methyltransferase</fullName>
    </alternativeName>
    <alternativeName>
        <fullName evidence="1">23S rRNA m2A2503 methyltransferase</fullName>
    </alternativeName>
    <alternativeName>
        <fullName evidence="1">Ribosomal RNA large subunit methyltransferase N</fullName>
    </alternativeName>
    <alternativeName>
        <fullName evidence="1">tRNA (adenine(37)-C(2))-methyltransferase</fullName>
    </alternativeName>
    <alternativeName>
        <fullName evidence="1">tRNA m2A37 methyltransferase</fullName>
    </alternativeName>
</protein>
<dbReference type="EC" id="2.1.1.192" evidence="1"/>
<dbReference type="EMBL" id="AE017282">
    <property type="protein sequence ID" value="AAU91045.1"/>
    <property type="molecule type" value="Genomic_DNA"/>
</dbReference>
<dbReference type="RefSeq" id="WP_010962082.1">
    <property type="nucleotide sequence ID" value="NC_002977.6"/>
</dbReference>
<dbReference type="SMR" id="Q603C0"/>
<dbReference type="STRING" id="243233.MCA2887"/>
<dbReference type="GeneID" id="88225060"/>
<dbReference type="KEGG" id="mca:MCA2887"/>
<dbReference type="eggNOG" id="COG0820">
    <property type="taxonomic scope" value="Bacteria"/>
</dbReference>
<dbReference type="HOGENOM" id="CLU_029101_0_0_6"/>
<dbReference type="Proteomes" id="UP000006821">
    <property type="component" value="Chromosome"/>
</dbReference>
<dbReference type="GO" id="GO:0005737">
    <property type="term" value="C:cytoplasm"/>
    <property type="evidence" value="ECO:0007669"/>
    <property type="project" value="UniProtKB-SubCell"/>
</dbReference>
<dbReference type="GO" id="GO:0051539">
    <property type="term" value="F:4 iron, 4 sulfur cluster binding"/>
    <property type="evidence" value="ECO:0007669"/>
    <property type="project" value="UniProtKB-UniRule"/>
</dbReference>
<dbReference type="GO" id="GO:0046872">
    <property type="term" value="F:metal ion binding"/>
    <property type="evidence" value="ECO:0007669"/>
    <property type="project" value="UniProtKB-KW"/>
</dbReference>
<dbReference type="GO" id="GO:0070040">
    <property type="term" value="F:rRNA (adenine(2503)-C2-)-methyltransferase activity"/>
    <property type="evidence" value="ECO:0007669"/>
    <property type="project" value="UniProtKB-UniRule"/>
</dbReference>
<dbReference type="GO" id="GO:0019843">
    <property type="term" value="F:rRNA binding"/>
    <property type="evidence" value="ECO:0007669"/>
    <property type="project" value="UniProtKB-UniRule"/>
</dbReference>
<dbReference type="GO" id="GO:0002935">
    <property type="term" value="F:tRNA (adenine(37)-C2)-methyltransferase activity"/>
    <property type="evidence" value="ECO:0007669"/>
    <property type="project" value="UniProtKB-UniRule"/>
</dbReference>
<dbReference type="GO" id="GO:0000049">
    <property type="term" value="F:tRNA binding"/>
    <property type="evidence" value="ECO:0007669"/>
    <property type="project" value="UniProtKB-UniRule"/>
</dbReference>
<dbReference type="GO" id="GO:0070475">
    <property type="term" value="P:rRNA base methylation"/>
    <property type="evidence" value="ECO:0007669"/>
    <property type="project" value="UniProtKB-UniRule"/>
</dbReference>
<dbReference type="GO" id="GO:0030488">
    <property type="term" value="P:tRNA methylation"/>
    <property type="evidence" value="ECO:0007669"/>
    <property type="project" value="UniProtKB-UniRule"/>
</dbReference>
<dbReference type="CDD" id="cd01335">
    <property type="entry name" value="Radical_SAM"/>
    <property type="match status" value="1"/>
</dbReference>
<dbReference type="FunFam" id="1.10.150.530:FF:000003">
    <property type="entry name" value="Dual-specificity RNA methyltransferase RlmN"/>
    <property type="match status" value="1"/>
</dbReference>
<dbReference type="FunFam" id="3.20.20.70:FF:000008">
    <property type="entry name" value="Dual-specificity RNA methyltransferase RlmN"/>
    <property type="match status" value="1"/>
</dbReference>
<dbReference type="Gene3D" id="1.10.150.530">
    <property type="match status" value="1"/>
</dbReference>
<dbReference type="Gene3D" id="3.20.20.70">
    <property type="entry name" value="Aldolase class I"/>
    <property type="match status" value="1"/>
</dbReference>
<dbReference type="HAMAP" id="MF_01849">
    <property type="entry name" value="RNA_methyltr_RlmN"/>
    <property type="match status" value="1"/>
</dbReference>
<dbReference type="InterPro" id="IPR013785">
    <property type="entry name" value="Aldolase_TIM"/>
</dbReference>
<dbReference type="InterPro" id="IPR040072">
    <property type="entry name" value="Methyltransferase_A"/>
</dbReference>
<dbReference type="InterPro" id="IPR048641">
    <property type="entry name" value="RlmN_N"/>
</dbReference>
<dbReference type="InterPro" id="IPR027492">
    <property type="entry name" value="RNA_MTrfase_RlmN"/>
</dbReference>
<dbReference type="InterPro" id="IPR004383">
    <property type="entry name" value="rRNA_lsu_MTrfase_RlmN/Cfr"/>
</dbReference>
<dbReference type="InterPro" id="IPR007197">
    <property type="entry name" value="rSAM"/>
</dbReference>
<dbReference type="NCBIfam" id="TIGR00048">
    <property type="entry name" value="rRNA_mod_RlmN"/>
    <property type="match status" value="1"/>
</dbReference>
<dbReference type="PANTHER" id="PTHR30544">
    <property type="entry name" value="23S RRNA METHYLTRANSFERASE"/>
    <property type="match status" value="1"/>
</dbReference>
<dbReference type="PANTHER" id="PTHR30544:SF5">
    <property type="entry name" value="RADICAL SAM CORE DOMAIN-CONTAINING PROTEIN"/>
    <property type="match status" value="1"/>
</dbReference>
<dbReference type="Pfam" id="PF04055">
    <property type="entry name" value="Radical_SAM"/>
    <property type="match status" value="1"/>
</dbReference>
<dbReference type="Pfam" id="PF21016">
    <property type="entry name" value="RlmN_N"/>
    <property type="match status" value="1"/>
</dbReference>
<dbReference type="PIRSF" id="PIRSF006004">
    <property type="entry name" value="CHP00048"/>
    <property type="match status" value="1"/>
</dbReference>
<dbReference type="SFLD" id="SFLDF00275">
    <property type="entry name" value="adenosine_C2_methyltransferase"/>
    <property type="match status" value="1"/>
</dbReference>
<dbReference type="SFLD" id="SFLDG01062">
    <property type="entry name" value="methyltransferase_(Class_A)"/>
    <property type="match status" value="1"/>
</dbReference>
<dbReference type="SUPFAM" id="SSF102114">
    <property type="entry name" value="Radical SAM enzymes"/>
    <property type="match status" value="1"/>
</dbReference>
<dbReference type="PROSITE" id="PS51918">
    <property type="entry name" value="RADICAL_SAM"/>
    <property type="match status" value="1"/>
</dbReference>
<name>RLMN_METCA</name>
<gene>
    <name evidence="1" type="primary">rlmN</name>
    <name type="ordered locus">MCA2887</name>
</gene>
<proteinExistence type="inferred from homology"/>
<organism>
    <name type="scientific">Methylococcus capsulatus (strain ATCC 33009 / NCIMB 11132 / Bath)</name>
    <dbReference type="NCBI Taxonomy" id="243233"/>
    <lineage>
        <taxon>Bacteria</taxon>
        <taxon>Pseudomonadati</taxon>
        <taxon>Pseudomonadota</taxon>
        <taxon>Gammaproteobacteria</taxon>
        <taxon>Methylococcales</taxon>
        <taxon>Methylococcaceae</taxon>
        <taxon>Methylococcus</taxon>
    </lineage>
</organism>
<feature type="chain" id="PRO_0000350257" description="Dual-specificity RNA methyltransferase RlmN">
    <location>
        <begin position="1"/>
        <end position="366"/>
    </location>
</feature>
<feature type="domain" description="Radical SAM core" evidence="2">
    <location>
        <begin position="108"/>
        <end position="340"/>
    </location>
</feature>
<feature type="active site" description="Proton acceptor" evidence="1">
    <location>
        <position position="102"/>
    </location>
</feature>
<feature type="active site" description="S-methylcysteine intermediate" evidence="1">
    <location>
        <position position="345"/>
    </location>
</feature>
<feature type="binding site" evidence="1">
    <location>
        <position position="122"/>
    </location>
    <ligand>
        <name>[4Fe-4S] cluster</name>
        <dbReference type="ChEBI" id="CHEBI:49883"/>
        <note>4Fe-4S-S-AdoMet</note>
    </ligand>
</feature>
<feature type="binding site" evidence="1">
    <location>
        <position position="126"/>
    </location>
    <ligand>
        <name>[4Fe-4S] cluster</name>
        <dbReference type="ChEBI" id="CHEBI:49883"/>
        <note>4Fe-4S-S-AdoMet</note>
    </ligand>
</feature>
<feature type="binding site" evidence="1">
    <location>
        <position position="129"/>
    </location>
    <ligand>
        <name>[4Fe-4S] cluster</name>
        <dbReference type="ChEBI" id="CHEBI:49883"/>
        <note>4Fe-4S-S-AdoMet</note>
    </ligand>
</feature>
<feature type="binding site" evidence="1">
    <location>
        <begin position="171"/>
        <end position="172"/>
    </location>
    <ligand>
        <name>S-adenosyl-L-methionine</name>
        <dbReference type="ChEBI" id="CHEBI:59789"/>
    </ligand>
</feature>
<feature type="binding site" evidence="1">
    <location>
        <position position="203"/>
    </location>
    <ligand>
        <name>S-adenosyl-L-methionine</name>
        <dbReference type="ChEBI" id="CHEBI:59789"/>
    </ligand>
</feature>
<feature type="binding site" evidence="1">
    <location>
        <begin position="225"/>
        <end position="227"/>
    </location>
    <ligand>
        <name>S-adenosyl-L-methionine</name>
        <dbReference type="ChEBI" id="CHEBI:59789"/>
    </ligand>
</feature>
<feature type="binding site" evidence="1">
    <location>
        <position position="302"/>
    </location>
    <ligand>
        <name>S-adenosyl-L-methionine</name>
        <dbReference type="ChEBI" id="CHEBI:59789"/>
    </ligand>
</feature>
<feature type="disulfide bond" description="(transient)" evidence="1">
    <location>
        <begin position="115"/>
        <end position="345"/>
    </location>
</feature>
<keyword id="KW-0004">4Fe-4S</keyword>
<keyword id="KW-0963">Cytoplasm</keyword>
<keyword id="KW-1015">Disulfide bond</keyword>
<keyword id="KW-0408">Iron</keyword>
<keyword id="KW-0411">Iron-sulfur</keyword>
<keyword id="KW-0479">Metal-binding</keyword>
<keyword id="KW-0489">Methyltransferase</keyword>
<keyword id="KW-1185">Reference proteome</keyword>
<keyword id="KW-0698">rRNA processing</keyword>
<keyword id="KW-0949">S-adenosyl-L-methionine</keyword>
<keyword id="KW-0808">Transferase</keyword>
<keyword id="KW-0819">tRNA processing</keyword>
<sequence>MNSAPVPADTETRVNLLDLDREGMEAFFVRLGEKPFRASQLLQWIHQRGVTDFGLMTNLSKTLRSRLEAVSEIRPPELVLEQRSADGTRKWVLQVDAVNRVETVLIPDEGRNTLCVSSQVGCSLECSFCSTARQGFNRNLTTAEIIGQLWVAQHRLDEEQRISNVVLMGMGEPLLNFGNVVAATRLMMDDFAYGLSKRRVTLSTSGIVPALDRLAEVSDISLAVSLHAPDDTLRNELVPINRKYPIRELLAACKRYVGTENRRKVTFEYVMLDGVNDRPEHARALVRLLSHVPSKVNLIPFNPFPNSAYRCSHPETIARFAQTLQDAGLITTTRKTRGRDIDAACGQLVGKVNDRSRRQFRLHLAH</sequence>